<proteinExistence type="evidence at transcript level"/>
<comment type="function">
    <text evidence="2">Necessary for early peroxisomal biogenesis. Acts both as a cytosolic chaperone and as an import receptor for peroxisomal membrane proteins (PMPs). Binds and stabilizes newly synthesized PMPs in the cytoplasm by interacting with their hydrophobic membrane-spanning domains, and targets them to the peroxisome membrane by binding to the integral membrane protein PEX3. Excludes CDKN2A from the nucleus and prevents its interaction with MDM2, which results in active degradation of TP53.</text>
</comment>
<comment type="subunit">
    <text evidence="1">Interacts with a broad range of peroxisomal membrane proteins, including PEX3, PEX10, PEX11A, PEX11B, PEX12, PEX13, PEX14 and PEX16, PXMP2/PMP22, PXMP4/PMP24, SLC25A17/PMP34, ABCD1/ALDP, ABCD2/ALDRP, and ABCD3/PMP70. Also interacts with the tumor suppressor CDKN2A/p19ARF (By similarity).</text>
</comment>
<comment type="subcellular location">
    <subcellularLocation>
        <location evidence="2">Cytoplasm</location>
    </subcellularLocation>
    <subcellularLocation>
        <location evidence="2">Peroxisome membrane</location>
        <topology evidence="2">Lipid-anchor</topology>
        <orientation evidence="2">Cytoplasmic side</orientation>
    </subcellularLocation>
    <text evidence="2">Mainly cytoplasmic. Some fraction membrane-associated to the outer surface of peroxisomes.</text>
</comment>
<comment type="similarity">
    <text evidence="6">Belongs to the peroxin-19 family.</text>
</comment>
<protein>
    <recommendedName>
        <fullName>Peroxisomal biogenesis factor 19</fullName>
    </recommendedName>
    <alternativeName>
        <fullName>Peroxin-19</fullName>
    </alternativeName>
    <alternativeName>
        <fullName>Peroxisomal farnesylated protein</fullName>
    </alternativeName>
</protein>
<evidence type="ECO:0000250" key="1"/>
<evidence type="ECO:0000250" key="2">
    <source>
        <dbReference type="UniProtKB" id="P40855"/>
    </source>
</evidence>
<evidence type="ECO:0000250" key="3">
    <source>
        <dbReference type="UniProtKB" id="Q8VCI5"/>
    </source>
</evidence>
<evidence type="ECO:0000250" key="4">
    <source>
        <dbReference type="UniProtKB" id="Q9QYU1"/>
    </source>
</evidence>
<evidence type="ECO:0000256" key="5">
    <source>
        <dbReference type="SAM" id="MobiDB-lite"/>
    </source>
</evidence>
<evidence type="ECO:0000305" key="6"/>
<sequence>MAAAEEDYGVGAEADRELEELLESALDDFDKAKPSPAPPSTTTAPDASGPQKRSPGDTAKDSLFASQEKFFQELFDSELASQATAEFEKAMKELAEEEPHLVEQFQKLSEAAGRVGSDMTSQQEFTSCLKETLSGLAKNATDLQNSGMSEEELTKAMEGLGMDEGDGEGNILPIMQSIMQNLLSKDVLYPSLKEITEKYPEWLQSHRESLPPEQFEKYQEQHSVMCKICEQFEAETPTDSETTQKARFEMVLDLMQQLQDLGHPPKELAGEMPPGLNFDLDALNLSGPPGASGEQCLIM</sequence>
<keyword id="KW-0007">Acetylation</keyword>
<keyword id="KW-0963">Cytoplasm</keyword>
<keyword id="KW-0449">Lipoprotein</keyword>
<keyword id="KW-0472">Membrane</keyword>
<keyword id="KW-0488">Methylation</keyword>
<keyword id="KW-0576">Peroxisome</keyword>
<keyword id="KW-0962">Peroxisome biogenesis</keyword>
<keyword id="KW-0597">Phosphoprotein</keyword>
<keyword id="KW-0636">Prenylation</keyword>
<keyword id="KW-1185">Reference proteome</keyword>
<reference key="1">
    <citation type="submission" date="2004-11" db="EMBL/GenBank/DDBJ databases">
        <authorList>
            <consortium name="The German cDNA consortium"/>
        </authorList>
    </citation>
    <scope>NUCLEOTIDE SEQUENCE [LARGE SCALE MRNA]</scope>
    <source>
        <tissue>Brain cortex</tissue>
    </source>
</reference>
<dbReference type="EMBL" id="CR860017">
    <property type="protein sequence ID" value="CAH92168.1"/>
    <property type="molecule type" value="mRNA"/>
</dbReference>
<dbReference type="RefSeq" id="NP_001126269.1">
    <property type="nucleotide sequence ID" value="NM_001132797.1"/>
</dbReference>
<dbReference type="SMR" id="Q5R7U2"/>
<dbReference type="FunCoup" id="Q5R7U2">
    <property type="interactions" value="1866"/>
</dbReference>
<dbReference type="STRING" id="9601.ENSPPYP00000000743"/>
<dbReference type="Ensembl" id="ENSPPYT00000000772.2">
    <property type="protein sequence ID" value="ENSPPYP00000000743.1"/>
    <property type="gene ID" value="ENSPPYG00000000636.2"/>
</dbReference>
<dbReference type="GeneID" id="100173241"/>
<dbReference type="KEGG" id="pon:100173241"/>
<dbReference type="CTD" id="5824"/>
<dbReference type="eggNOG" id="KOG3133">
    <property type="taxonomic scope" value="Eukaryota"/>
</dbReference>
<dbReference type="GeneTree" id="ENSGT00390000010993"/>
<dbReference type="HOGENOM" id="CLU_043063_3_0_1"/>
<dbReference type="InParanoid" id="Q5R7U2"/>
<dbReference type="OMA" id="YEPMKEM"/>
<dbReference type="OrthoDB" id="21292at2759"/>
<dbReference type="TreeFam" id="TF315082"/>
<dbReference type="Proteomes" id="UP000001595">
    <property type="component" value="Chromosome 1"/>
</dbReference>
<dbReference type="GO" id="GO:0005737">
    <property type="term" value="C:cytoplasm"/>
    <property type="evidence" value="ECO:0000250"/>
    <property type="project" value="UniProtKB"/>
</dbReference>
<dbReference type="GO" id="GO:0005829">
    <property type="term" value="C:cytosol"/>
    <property type="evidence" value="ECO:0007669"/>
    <property type="project" value="Ensembl"/>
</dbReference>
<dbReference type="GO" id="GO:0016020">
    <property type="term" value="C:membrane"/>
    <property type="evidence" value="ECO:0000250"/>
    <property type="project" value="UniProtKB"/>
</dbReference>
<dbReference type="GO" id="GO:0005654">
    <property type="term" value="C:nucleoplasm"/>
    <property type="evidence" value="ECO:0007669"/>
    <property type="project" value="Ensembl"/>
</dbReference>
<dbReference type="GO" id="GO:0005634">
    <property type="term" value="C:nucleus"/>
    <property type="evidence" value="ECO:0000250"/>
    <property type="project" value="UniProtKB"/>
</dbReference>
<dbReference type="GO" id="GO:0005778">
    <property type="term" value="C:peroxisomal membrane"/>
    <property type="evidence" value="ECO:0000250"/>
    <property type="project" value="UniProtKB"/>
</dbReference>
<dbReference type="GO" id="GO:0032991">
    <property type="term" value="C:protein-containing complex"/>
    <property type="evidence" value="ECO:0007669"/>
    <property type="project" value="Ensembl"/>
</dbReference>
<dbReference type="GO" id="GO:0051117">
    <property type="term" value="F:ATPase binding"/>
    <property type="evidence" value="ECO:0007669"/>
    <property type="project" value="Ensembl"/>
</dbReference>
<dbReference type="GO" id="GO:0036105">
    <property type="term" value="F:peroxisome membrane class-1 targeting sequence binding"/>
    <property type="evidence" value="ECO:0007669"/>
    <property type="project" value="Ensembl"/>
</dbReference>
<dbReference type="GO" id="GO:0140597">
    <property type="term" value="F:protein carrier chaperone"/>
    <property type="evidence" value="ECO:0007669"/>
    <property type="project" value="Ensembl"/>
</dbReference>
<dbReference type="GO" id="GO:0061077">
    <property type="term" value="P:chaperone-mediated protein folding"/>
    <property type="evidence" value="ECO:0007669"/>
    <property type="project" value="Ensembl"/>
</dbReference>
<dbReference type="GO" id="GO:0016559">
    <property type="term" value="P:peroxisome fission"/>
    <property type="evidence" value="ECO:0007669"/>
    <property type="project" value="Ensembl"/>
</dbReference>
<dbReference type="GO" id="GO:0016557">
    <property type="term" value="P:peroxisome membrane biogenesis"/>
    <property type="evidence" value="ECO:0000250"/>
    <property type="project" value="UniProtKB"/>
</dbReference>
<dbReference type="GO" id="GO:0007031">
    <property type="term" value="P:peroxisome organization"/>
    <property type="evidence" value="ECO:0000250"/>
    <property type="project" value="UniProtKB"/>
</dbReference>
<dbReference type="GO" id="GO:0045046">
    <property type="term" value="P:protein import into peroxisome membrane"/>
    <property type="evidence" value="ECO:0007669"/>
    <property type="project" value="Ensembl"/>
</dbReference>
<dbReference type="GO" id="GO:0050821">
    <property type="term" value="P:protein stabilization"/>
    <property type="evidence" value="ECO:0007669"/>
    <property type="project" value="Ensembl"/>
</dbReference>
<dbReference type="GO" id="GO:0006625">
    <property type="term" value="P:protein targeting to peroxisome"/>
    <property type="evidence" value="ECO:0000250"/>
    <property type="project" value="UniProtKB"/>
</dbReference>
<dbReference type="FunFam" id="1.20.120.900:FF:000001">
    <property type="entry name" value="Putative peroxisomal biogenesis factor 19"/>
    <property type="match status" value="1"/>
</dbReference>
<dbReference type="Gene3D" id="1.20.120.900">
    <property type="entry name" value="Pex19, mPTS binding domain"/>
    <property type="match status" value="1"/>
</dbReference>
<dbReference type="InterPro" id="IPR006708">
    <property type="entry name" value="Pex19"/>
</dbReference>
<dbReference type="InterPro" id="IPR038322">
    <property type="entry name" value="Pex19_C_sf"/>
</dbReference>
<dbReference type="PANTHER" id="PTHR12774">
    <property type="entry name" value="PEROXISOMAL BIOGENESIS FACTOR 19"/>
    <property type="match status" value="1"/>
</dbReference>
<dbReference type="PANTHER" id="PTHR12774:SF2">
    <property type="entry name" value="PEROXISOMAL BIOGENESIS FACTOR 19"/>
    <property type="match status" value="1"/>
</dbReference>
<dbReference type="Pfam" id="PF04614">
    <property type="entry name" value="Pex19"/>
    <property type="match status" value="1"/>
</dbReference>
<name>PEX19_PONAB</name>
<feature type="initiator methionine" description="Removed" evidence="2">
    <location>
        <position position="1"/>
    </location>
</feature>
<feature type="chain" id="PRO_0000253624" description="Peroxisomal biogenesis factor 19">
    <location>
        <begin position="2"/>
        <end position="296"/>
    </location>
</feature>
<feature type="propeptide" id="PRO_0000396702" description="Removed in mature form" evidence="1">
    <location>
        <begin position="297"/>
        <end position="299"/>
    </location>
</feature>
<feature type="region of interest" description="Disordered" evidence="5">
    <location>
        <begin position="1"/>
        <end position="63"/>
    </location>
</feature>
<feature type="region of interest" description="Necessary for PEX19 function on peroxisome biogenesis" evidence="1">
    <location>
        <begin position="2"/>
        <end position="91"/>
    </location>
</feature>
<feature type="region of interest" description="Docking to the peroxisome membrane and binding to PEX3" evidence="1">
    <location>
        <begin position="2"/>
        <end position="56"/>
    </location>
</feature>
<feature type="compositionally biased region" description="Acidic residues" evidence="5">
    <location>
        <begin position="16"/>
        <end position="27"/>
    </location>
</feature>
<feature type="modified residue" description="N-acetylalanine" evidence="2">
    <location>
        <position position="2"/>
    </location>
</feature>
<feature type="modified residue" description="Phosphoserine" evidence="2">
    <location>
        <position position="35"/>
    </location>
</feature>
<feature type="modified residue" description="Phosphoserine" evidence="2">
    <location>
        <position position="54"/>
    </location>
</feature>
<feature type="modified residue" description="Phosphoserine" evidence="4">
    <location>
        <position position="66"/>
    </location>
</feature>
<feature type="modified residue" description="Phosphothreonine" evidence="3">
    <location>
        <position position="236"/>
    </location>
</feature>
<feature type="modified residue" description="Cysteine methyl ester" evidence="1">
    <location>
        <position position="296"/>
    </location>
</feature>
<feature type="lipid moiety-binding region" description="S-farnesyl cysteine" evidence="1">
    <location>
        <position position="296"/>
    </location>
</feature>
<gene>
    <name type="primary">PEX19</name>
    <name type="synonym">PXF</name>
</gene>
<accession>Q5R7U2</accession>
<organism>
    <name type="scientific">Pongo abelii</name>
    <name type="common">Sumatran orangutan</name>
    <name type="synonym">Pongo pygmaeus abelii</name>
    <dbReference type="NCBI Taxonomy" id="9601"/>
    <lineage>
        <taxon>Eukaryota</taxon>
        <taxon>Metazoa</taxon>
        <taxon>Chordata</taxon>
        <taxon>Craniata</taxon>
        <taxon>Vertebrata</taxon>
        <taxon>Euteleostomi</taxon>
        <taxon>Mammalia</taxon>
        <taxon>Eutheria</taxon>
        <taxon>Euarchontoglires</taxon>
        <taxon>Primates</taxon>
        <taxon>Haplorrhini</taxon>
        <taxon>Catarrhini</taxon>
        <taxon>Hominidae</taxon>
        <taxon>Pongo</taxon>
    </lineage>
</organism>